<evidence type="ECO:0000255" key="1">
    <source>
        <dbReference type="HAMAP-Rule" id="MF_00551"/>
    </source>
</evidence>
<accession>A6TR08</accession>
<dbReference type="EC" id="2.7.1.48" evidence="1"/>
<dbReference type="EMBL" id="CP000724">
    <property type="protein sequence ID" value="ABR48626.1"/>
    <property type="molecule type" value="Genomic_DNA"/>
</dbReference>
<dbReference type="RefSeq" id="WP_012063601.1">
    <property type="nucleotide sequence ID" value="NC_009633.1"/>
</dbReference>
<dbReference type="SMR" id="A6TR08"/>
<dbReference type="STRING" id="293826.Amet_2472"/>
<dbReference type="KEGG" id="amt:Amet_2472"/>
<dbReference type="eggNOG" id="COG0572">
    <property type="taxonomic scope" value="Bacteria"/>
</dbReference>
<dbReference type="HOGENOM" id="CLU_021278_1_2_9"/>
<dbReference type="OrthoDB" id="9777642at2"/>
<dbReference type="UniPathway" id="UPA00574">
    <property type="reaction ID" value="UER00637"/>
</dbReference>
<dbReference type="UniPathway" id="UPA00579">
    <property type="reaction ID" value="UER00640"/>
</dbReference>
<dbReference type="Proteomes" id="UP000001572">
    <property type="component" value="Chromosome"/>
</dbReference>
<dbReference type="GO" id="GO:0005737">
    <property type="term" value="C:cytoplasm"/>
    <property type="evidence" value="ECO:0007669"/>
    <property type="project" value="UniProtKB-SubCell"/>
</dbReference>
<dbReference type="GO" id="GO:0005524">
    <property type="term" value="F:ATP binding"/>
    <property type="evidence" value="ECO:0007669"/>
    <property type="project" value="UniProtKB-UniRule"/>
</dbReference>
<dbReference type="GO" id="GO:0043771">
    <property type="term" value="F:cytidine kinase activity"/>
    <property type="evidence" value="ECO:0007669"/>
    <property type="project" value="RHEA"/>
</dbReference>
<dbReference type="GO" id="GO:0004849">
    <property type="term" value="F:uridine kinase activity"/>
    <property type="evidence" value="ECO:0007669"/>
    <property type="project" value="UniProtKB-UniRule"/>
</dbReference>
<dbReference type="GO" id="GO:0044211">
    <property type="term" value="P:CTP salvage"/>
    <property type="evidence" value="ECO:0007669"/>
    <property type="project" value="UniProtKB-UniRule"/>
</dbReference>
<dbReference type="GO" id="GO:0044206">
    <property type="term" value="P:UMP salvage"/>
    <property type="evidence" value="ECO:0007669"/>
    <property type="project" value="UniProtKB-UniRule"/>
</dbReference>
<dbReference type="CDD" id="cd02023">
    <property type="entry name" value="UMPK"/>
    <property type="match status" value="1"/>
</dbReference>
<dbReference type="Gene3D" id="3.40.50.300">
    <property type="entry name" value="P-loop containing nucleotide triphosphate hydrolases"/>
    <property type="match status" value="1"/>
</dbReference>
<dbReference type="HAMAP" id="MF_00551">
    <property type="entry name" value="Uridine_kinase"/>
    <property type="match status" value="1"/>
</dbReference>
<dbReference type="InterPro" id="IPR027417">
    <property type="entry name" value="P-loop_NTPase"/>
</dbReference>
<dbReference type="InterPro" id="IPR006083">
    <property type="entry name" value="PRK/URK"/>
</dbReference>
<dbReference type="InterPro" id="IPR026008">
    <property type="entry name" value="Uridine_kinase"/>
</dbReference>
<dbReference type="InterPro" id="IPR000764">
    <property type="entry name" value="Uridine_kinase-like"/>
</dbReference>
<dbReference type="NCBIfam" id="NF004018">
    <property type="entry name" value="PRK05480.1"/>
    <property type="match status" value="1"/>
</dbReference>
<dbReference type="NCBIfam" id="TIGR00235">
    <property type="entry name" value="udk"/>
    <property type="match status" value="1"/>
</dbReference>
<dbReference type="PANTHER" id="PTHR10285">
    <property type="entry name" value="URIDINE KINASE"/>
    <property type="match status" value="1"/>
</dbReference>
<dbReference type="Pfam" id="PF00485">
    <property type="entry name" value="PRK"/>
    <property type="match status" value="1"/>
</dbReference>
<dbReference type="PRINTS" id="PR00988">
    <property type="entry name" value="URIDINKINASE"/>
</dbReference>
<dbReference type="SUPFAM" id="SSF52540">
    <property type="entry name" value="P-loop containing nucleoside triphosphate hydrolases"/>
    <property type="match status" value="1"/>
</dbReference>
<name>URK_ALKMQ</name>
<protein>
    <recommendedName>
        <fullName evidence="1">Uridine kinase</fullName>
        <ecNumber evidence="1">2.7.1.48</ecNumber>
    </recommendedName>
    <alternativeName>
        <fullName evidence="1">Cytidine monophosphokinase</fullName>
    </alternativeName>
    <alternativeName>
        <fullName evidence="1">Uridine monophosphokinase</fullName>
    </alternativeName>
</protein>
<reference key="1">
    <citation type="journal article" date="2016" name="Genome Announc.">
        <title>Complete genome sequence of Alkaliphilus metalliredigens strain QYMF, an alkaliphilic and metal-reducing bacterium isolated from borax-contaminated leachate ponds.</title>
        <authorList>
            <person name="Hwang C."/>
            <person name="Copeland A."/>
            <person name="Lucas S."/>
            <person name="Lapidus A."/>
            <person name="Barry K."/>
            <person name="Detter J.C."/>
            <person name="Glavina Del Rio T."/>
            <person name="Hammon N."/>
            <person name="Israni S."/>
            <person name="Dalin E."/>
            <person name="Tice H."/>
            <person name="Pitluck S."/>
            <person name="Chertkov O."/>
            <person name="Brettin T."/>
            <person name="Bruce D."/>
            <person name="Han C."/>
            <person name="Schmutz J."/>
            <person name="Larimer F."/>
            <person name="Land M.L."/>
            <person name="Hauser L."/>
            <person name="Kyrpides N."/>
            <person name="Mikhailova N."/>
            <person name="Ye Q."/>
            <person name="Zhou J."/>
            <person name="Richardson P."/>
            <person name="Fields M.W."/>
        </authorList>
    </citation>
    <scope>NUCLEOTIDE SEQUENCE [LARGE SCALE GENOMIC DNA]</scope>
    <source>
        <strain>QYMF</strain>
    </source>
</reference>
<gene>
    <name evidence="1" type="primary">udk</name>
    <name type="ordered locus">Amet_2472</name>
</gene>
<organism>
    <name type="scientific">Alkaliphilus metalliredigens (strain QYMF)</name>
    <dbReference type="NCBI Taxonomy" id="293826"/>
    <lineage>
        <taxon>Bacteria</taxon>
        <taxon>Bacillati</taxon>
        <taxon>Bacillota</taxon>
        <taxon>Clostridia</taxon>
        <taxon>Peptostreptococcales</taxon>
        <taxon>Natronincolaceae</taxon>
        <taxon>Alkaliphilus</taxon>
    </lineage>
</organism>
<sequence length="208" mass="24020">MNRPIFIGITGGTGSGKSTVARAIFESLPEKNIAIIEQDSYYRDQSHLALEERVKTNYDHPLAFDTALLTEHLMLLAQNKTIEKPIYDFERHTRKKEFEVIEPRDIMILEGIMILDDPALRDMLDIKIFVDTDADVRIIRRIRRDMEERGRTLTSVIQQYLTTVRPAHLQFVEPNKRYANIIIPEGGDNQVAIDIMVAKIKTIIQERS</sequence>
<feature type="chain" id="PRO_1000200502" description="Uridine kinase">
    <location>
        <begin position="1"/>
        <end position="208"/>
    </location>
</feature>
<feature type="binding site" evidence="1">
    <location>
        <begin position="11"/>
        <end position="18"/>
    </location>
    <ligand>
        <name>ATP</name>
        <dbReference type="ChEBI" id="CHEBI:30616"/>
    </ligand>
</feature>
<comment type="catalytic activity">
    <reaction evidence="1">
        <text>uridine + ATP = UMP + ADP + H(+)</text>
        <dbReference type="Rhea" id="RHEA:16825"/>
        <dbReference type="ChEBI" id="CHEBI:15378"/>
        <dbReference type="ChEBI" id="CHEBI:16704"/>
        <dbReference type="ChEBI" id="CHEBI:30616"/>
        <dbReference type="ChEBI" id="CHEBI:57865"/>
        <dbReference type="ChEBI" id="CHEBI:456216"/>
        <dbReference type="EC" id="2.7.1.48"/>
    </reaction>
</comment>
<comment type="catalytic activity">
    <reaction evidence="1">
        <text>cytidine + ATP = CMP + ADP + H(+)</text>
        <dbReference type="Rhea" id="RHEA:24674"/>
        <dbReference type="ChEBI" id="CHEBI:15378"/>
        <dbReference type="ChEBI" id="CHEBI:17562"/>
        <dbReference type="ChEBI" id="CHEBI:30616"/>
        <dbReference type="ChEBI" id="CHEBI:60377"/>
        <dbReference type="ChEBI" id="CHEBI:456216"/>
        <dbReference type="EC" id="2.7.1.48"/>
    </reaction>
</comment>
<comment type="pathway">
    <text evidence="1">Pyrimidine metabolism; CTP biosynthesis via salvage pathway; CTP from cytidine: step 1/3.</text>
</comment>
<comment type="pathway">
    <text evidence="1">Pyrimidine metabolism; UMP biosynthesis via salvage pathway; UMP from uridine: step 1/1.</text>
</comment>
<comment type="subcellular location">
    <subcellularLocation>
        <location evidence="1">Cytoplasm</location>
    </subcellularLocation>
</comment>
<comment type="similarity">
    <text evidence="1">Belongs to the uridine kinase family.</text>
</comment>
<keyword id="KW-0067">ATP-binding</keyword>
<keyword id="KW-0963">Cytoplasm</keyword>
<keyword id="KW-0418">Kinase</keyword>
<keyword id="KW-0547">Nucleotide-binding</keyword>
<keyword id="KW-1185">Reference proteome</keyword>
<keyword id="KW-0808">Transferase</keyword>
<proteinExistence type="inferred from homology"/>